<dbReference type="EC" id="3.1.-.-" evidence="3"/>
<dbReference type="EMBL" id="CU329671">
    <property type="protein sequence ID" value="CAA21816.2"/>
    <property type="molecule type" value="Genomic_DNA"/>
</dbReference>
<dbReference type="PIR" id="T40825">
    <property type="entry name" value="T40825"/>
</dbReference>
<dbReference type="RefSeq" id="NP_596538.2">
    <property type="nucleotide sequence ID" value="NM_001022459.2"/>
</dbReference>
<dbReference type="SMR" id="O94279"/>
<dbReference type="BioGRID" id="277886">
    <property type="interactions" value="13"/>
</dbReference>
<dbReference type="FunCoup" id="O94279">
    <property type="interactions" value="39"/>
</dbReference>
<dbReference type="STRING" id="284812.O94279"/>
<dbReference type="PaxDb" id="4896-SPBP8B7.31.1"/>
<dbReference type="EnsemblFungi" id="SPBP8B7.31.1">
    <property type="protein sequence ID" value="SPBP8B7.31.1:pep"/>
    <property type="gene ID" value="SPBP8B7.31"/>
</dbReference>
<dbReference type="KEGG" id="spo:2541375"/>
<dbReference type="PomBase" id="SPBP8B7.31"/>
<dbReference type="VEuPathDB" id="FungiDB:SPBP8B7.31"/>
<dbReference type="eggNOG" id="KOG4549">
    <property type="taxonomic scope" value="Eukaryota"/>
</dbReference>
<dbReference type="HOGENOM" id="CLU_071162_0_1_1"/>
<dbReference type="InParanoid" id="O94279"/>
<dbReference type="OMA" id="GVWAWRK"/>
<dbReference type="PRO" id="PR:O94279"/>
<dbReference type="Proteomes" id="UP000002485">
    <property type="component" value="Chromosome II"/>
</dbReference>
<dbReference type="GO" id="GO:0005829">
    <property type="term" value="C:cytosol"/>
    <property type="evidence" value="ECO:0007005"/>
    <property type="project" value="PomBase"/>
</dbReference>
<dbReference type="GO" id="GO:0005634">
    <property type="term" value="C:nucleus"/>
    <property type="evidence" value="ECO:0007005"/>
    <property type="project" value="PomBase"/>
</dbReference>
<dbReference type="GO" id="GO:0003993">
    <property type="term" value="F:acid phosphatase activity"/>
    <property type="evidence" value="ECO:0000318"/>
    <property type="project" value="GO_Central"/>
</dbReference>
<dbReference type="GO" id="GO:0046872">
    <property type="term" value="F:metal ion binding"/>
    <property type="evidence" value="ECO:0007669"/>
    <property type="project" value="UniProtKB-KW"/>
</dbReference>
<dbReference type="GO" id="GO:0004725">
    <property type="term" value="F:protein tyrosine phosphatase activity"/>
    <property type="evidence" value="ECO:0007669"/>
    <property type="project" value="UniProtKB-EC"/>
</dbReference>
<dbReference type="CDD" id="cd07501">
    <property type="entry name" value="HAD_MDP-1_like"/>
    <property type="match status" value="1"/>
</dbReference>
<dbReference type="Gene3D" id="3.40.50.1000">
    <property type="entry name" value="HAD superfamily/HAD-like"/>
    <property type="match status" value="1"/>
</dbReference>
<dbReference type="InterPro" id="IPR036412">
    <property type="entry name" value="HAD-like_sf"/>
</dbReference>
<dbReference type="InterPro" id="IPR023214">
    <property type="entry name" value="HAD_sf"/>
</dbReference>
<dbReference type="InterPro" id="IPR010033">
    <property type="entry name" value="HAD_SF_ppase_IIIC"/>
</dbReference>
<dbReference type="InterPro" id="IPR035679">
    <property type="entry name" value="MDP-1_euk"/>
</dbReference>
<dbReference type="InterPro" id="IPR010036">
    <property type="entry name" value="MDP_1_eu_arc"/>
</dbReference>
<dbReference type="NCBIfam" id="TIGR01681">
    <property type="entry name" value="HAD-SF-IIIC"/>
    <property type="match status" value="1"/>
</dbReference>
<dbReference type="NCBIfam" id="TIGR01685">
    <property type="entry name" value="MDP-1"/>
    <property type="match status" value="1"/>
</dbReference>
<dbReference type="PANTHER" id="PTHR17901:SF14">
    <property type="entry name" value="MAGNESIUM-DEPENDENT PHOSPHATASE 1"/>
    <property type="match status" value="1"/>
</dbReference>
<dbReference type="PANTHER" id="PTHR17901">
    <property type="entry name" value="MAGNESIUM-DEPENDENT PHOSPHATASE 1 MDP1"/>
    <property type="match status" value="1"/>
</dbReference>
<dbReference type="Pfam" id="PF12689">
    <property type="entry name" value="Acid_PPase"/>
    <property type="match status" value="1"/>
</dbReference>
<dbReference type="SFLD" id="SFLDG01131">
    <property type="entry name" value="C1.5.2:_MDP_Like"/>
    <property type="match status" value="1"/>
</dbReference>
<dbReference type="SFLD" id="SFLDG01129">
    <property type="entry name" value="C1.5:_HAD__Beta-PGM__Phosphata"/>
    <property type="match status" value="1"/>
</dbReference>
<dbReference type="SUPFAM" id="SSF56784">
    <property type="entry name" value="HAD-like"/>
    <property type="match status" value="1"/>
</dbReference>
<comment type="subcellular location">
    <subcellularLocation>
        <location evidence="2">Cytoplasm</location>
    </subcellularLocation>
    <subcellularLocation>
        <location evidence="2">Nucleus</location>
    </subcellularLocation>
</comment>
<comment type="similarity">
    <text evidence="3">Belongs to the HAD-like hydrolase superfamily.</text>
</comment>
<comment type="caution">
    <text evidence="3">Not likely to act as a protein phosphatase.</text>
</comment>
<organism>
    <name type="scientific">Schizosaccharomyces pombe (strain 972 / ATCC 24843)</name>
    <name type="common">Fission yeast</name>
    <dbReference type="NCBI Taxonomy" id="284812"/>
    <lineage>
        <taxon>Eukaryota</taxon>
        <taxon>Fungi</taxon>
        <taxon>Dikarya</taxon>
        <taxon>Ascomycota</taxon>
        <taxon>Taphrinomycotina</taxon>
        <taxon>Schizosaccharomycetes</taxon>
        <taxon>Schizosaccharomycetales</taxon>
        <taxon>Schizosaccharomycetaceae</taxon>
        <taxon>Schizosaccharomyces</taxon>
    </lineage>
</organism>
<accession>O94279</accession>
<reference key="1">
    <citation type="journal article" date="2002" name="Nature">
        <title>The genome sequence of Schizosaccharomyces pombe.</title>
        <authorList>
            <person name="Wood V."/>
            <person name="Gwilliam R."/>
            <person name="Rajandream M.A."/>
            <person name="Lyne M.H."/>
            <person name="Lyne R."/>
            <person name="Stewart A."/>
            <person name="Sgouros J.G."/>
            <person name="Peat N."/>
            <person name="Hayles J."/>
            <person name="Baker S.G."/>
            <person name="Basham D."/>
            <person name="Bowman S."/>
            <person name="Brooks K."/>
            <person name="Brown D."/>
            <person name="Brown S."/>
            <person name="Chillingworth T."/>
            <person name="Churcher C.M."/>
            <person name="Collins M."/>
            <person name="Connor R."/>
            <person name="Cronin A."/>
            <person name="Davis P."/>
            <person name="Feltwell T."/>
            <person name="Fraser A."/>
            <person name="Gentles S."/>
            <person name="Goble A."/>
            <person name="Hamlin N."/>
            <person name="Harris D.E."/>
            <person name="Hidalgo J."/>
            <person name="Hodgson G."/>
            <person name="Holroyd S."/>
            <person name="Hornsby T."/>
            <person name="Howarth S."/>
            <person name="Huckle E.J."/>
            <person name="Hunt S."/>
            <person name="Jagels K."/>
            <person name="James K.D."/>
            <person name="Jones L."/>
            <person name="Jones M."/>
            <person name="Leather S."/>
            <person name="McDonald S."/>
            <person name="McLean J."/>
            <person name="Mooney P."/>
            <person name="Moule S."/>
            <person name="Mungall K.L."/>
            <person name="Murphy L.D."/>
            <person name="Niblett D."/>
            <person name="Odell C."/>
            <person name="Oliver K."/>
            <person name="O'Neil S."/>
            <person name="Pearson D."/>
            <person name="Quail M.A."/>
            <person name="Rabbinowitsch E."/>
            <person name="Rutherford K.M."/>
            <person name="Rutter S."/>
            <person name="Saunders D."/>
            <person name="Seeger K."/>
            <person name="Sharp S."/>
            <person name="Skelton J."/>
            <person name="Simmonds M.N."/>
            <person name="Squares R."/>
            <person name="Squares S."/>
            <person name="Stevens K."/>
            <person name="Taylor K."/>
            <person name="Taylor R.G."/>
            <person name="Tivey A."/>
            <person name="Walsh S.V."/>
            <person name="Warren T."/>
            <person name="Whitehead S."/>
            <person name="Woodward J.R."/>
            <person name="Volckaert G."/>
            <person name="Aert R."/>
            <person name="Robben J."/>
            <person name="Grymonprez B."/>
            <person name="Weltjens I."/>
            <person name="Vanstreels E."/>
            <person name="Rieger M."/>
            <person name="Schaefer M."/>
            <person name="Mueller-Auer S."/>
            <person name="Gabel C."/>
            <person name="Fuchs M."/>
            <person name="Duesterhoeft A."/>
            <person name="Fritzc C."/>
            <person name="Holzer E."/>
            <person name="Moestl D."/>
            <person name="Hilbert H."/>
            <person name="Borzym K."/>
            <person name="Langer I."/>
            <person name="Beck A."/>
            <person name="Lehrach H."/>
            <person name="Reinhardt R."/>
            <person name="Pohl T.M."/>
            <person name="Eger P."/>
            <person name="Zimmermann W."/>
            <person name="Wedler H."/>
            <person name="Wambutt R."/>
            <person name="Purnelle B."/>
            <person name="Goffeau A."/>
            <person name="Cadieu E."/>
            <person name="Dreano S."/>
            <person name="Gloux S."/>
            <person name="Lelaure V."/>
            <person name="Mottier S."/>
            <person name="Galibert F."/>
            <person name="Aves S.J."/>
            <person name="Xiang Z."/>
            <person name="Hunt C."/>
            <person name="Moore K."/>
            <person name="Hurst S.M."/>
            <person name="Lucas M."/>
            <person name="Rochet M."/>
            <person name="Gaillardin C."/>
            <person name="Tallada V.A."/>
            <person name="Garzon A."/>
            <person name="Thode G."/>
            <person name="Daga R.R."/>
            <person name="Cruzado L."/>
            <person name="Jimenez J."/>
            <person name="Sanchez M."/>
            <person name="del Rey F."/>
            <person name="Benito J."/>
            <person name="Dominguez A."/>
            <person name="Revuelta J.L."/>
            <person name="Moreno S."/>
            <person name="Armstrong J."/>
            <person name="Forsburg S.L."/>
            <person name="Cerutti L."/>
            <person name="Lowe T."/>
            <person name="McCombie W.R."/>
            <person name="Paulsen I."/>
            <person name="Potashkin J."/>
            <person name="Shpakovski G.V."/>
            <person name="Ussery D."/>
            <person name="Barrell B.G."/>
            <person name="Nurse P."/>
        </authorList>
    </citation>
    <scope>NUCLEOTIDE SEQUENCE [LARGE SCALE GENOMIC DNA]</scope>
    <source>
        <strain>972 / ATCC 24843</strain>
    </source>
</reference>
<reference key="2">
    <citation type="journal article" date="2006" name="Nat. Biotechnol.">
        <title>ORFeome cloning and global analysis of protein localization in the fission yeast Schizosaccharomyces pombe.</title>
        <authorList>
            <person name="Matsuyama A."/>
            <person name="Arai R."/>
            <person name="Yashiroda Y."/>
            <person name="Shirai A."/>
            <person name="Kamata A."/>
            <person name="Sekido S."/>
            <person name="Kobayashi Y."/>
            <person name="Hashimoto A."/>
            <person name="Hamamoto M."/>
            <person name="Hiraoka Y."/>
            <person name="Horinouchi S."/>
            <person name="Yoshida M."/>
        </authorList>
    </citation>
    <scope>SUBCELLULAR LOCATION [LARGE SCALE ANALYSIS]</scope>
</reference>
<reference key="3">
    <citation type="journal article" date="2011" name="Genetics">
        <title>Augmented annotation of the Schizosaccharomyces pombe genome reveals additional genes required for growth and viability.</title>
        <authorList>
            <person name="Bitton D.A."/>
            <person name="Wood V."/>
            <person name="Scutt P.J."/>
            <person name="Grallert A."/>
            <person name="Yates T."/>
            <person name="Smith D.L."/>
            <person name="Hagan I.M."/>
            <person name="Miller C.J."/>
        </authorList>
    </citation>
    <scope>REVISION OF GENE MODEL</scope>
    <scope>IDENTIFICATION BY MASS SPECTROMETRY</scope>
</reference>
<feature type="chain" id="PRO_0000352835" description="HAD-like hydrolase superfamily protein P8B7.31">
    <location>
        <begin position="1"/>
        <end position="172"/>
    </location>
</feature>
<feature type="active site" description="Nucleophile" evidence="1">
    <location>
        <position position="14"/>
    </location>
</feature>
<feature type="active site" description="Proton donor" evidence="1">
    <location>
        <position position="16"/>
    </location>
</feature>
<feature type="binding site" evidence="1">
    <location>
        <position position="14"/>
    </location>
    <ligand>
        <name>Mg(2+)</name>
        <dbReference type="ChEBI" id="CHEBI:18420"/>
    </ligand>
</feature>
<feature type="binding site" evidence="1">
    <location>
        <position position="16"/>
    </location>
    <ligand>
        <name>Mg(2+)</name>
        <dbReference type="ChEBI" id="CHEBI:18420"/>
    </ligand>
</feature>
<feature type="binding site" evidence="1">
    <location>
        <position position="137"/>
    </location>
    <ligand>
        <name>Mg(2+)</name>
        <dbReference type="ChEBI" id="CHEBI:18420"/>
    </ligand>
</feature>
<protein>
    <recommendedName>
        <fullName evidence="3">HAD-like hydrolase superfamily protein P8B7.31</fullName>
        <ecNumber evidence="3">3.1.-.-</ecNumber>
    </recommendedName>
</protein>
<keyword id="KW-0963">Cytoplasm</keyword>
<keyword id="KW-0378">Hydrolase</keyword>
<keyword id="KW-0460">Magnesium</keyword>
<keyword id="KW-0479">Metal-binding</keyword>
<keyword id="KW-0539">Nucleus</keyword>
<keyword id="KW-1185">Reference proteome</keyword>
<sequence length="172" mass="19909">MVKNIEFPKCVVFDLDYTLWPLWIDTHVTAPFKPSKNDPGVLIDKYGTEICFYSDITGILQELRNQKVTLCVASRTCAPKYAKQALNLMKVPIDGSLKPAIEFFTYVKAWPGSKMDHFKEIHNESGIDYREMVFFDDESRNREVERLGVTFLEKIKKNSLNILSFLKNHMHG</sequence>
<name>MGDP1_SCHPO</name>
<evidence type="ECO:0000250" key="1">
    <source>
        <dbReference type="UniProtKB" id="Q96GD0"/>
    </source>
</evidence>
<evidence type="ECO:0000269" key="2">
    <source>
    </source>
</evidence>
<evidence type="ECO:0000305" key="3"/>
<gene>
    <name type="ORF">SPBP8B7.31</name>
</gene>
<proteinExistence type="evidence at protein level"/>